<sequence>MSAPRTLYDKIWDDHLVDEQADGTCLLYIDRHLVHEVTSPQAFEGLRMSGRKVRAPEKTLAVVDHNVPTSPDRHLGIKNEESRIQVEQLAKNAAEFNVEYYSENDKRQGIVHIIGPEQGFTLPGMTIVCGDSHTSTHGAFGSLAHGIGTSEVEHVLATQTLIQKKAKNMLVQVDGQLPAGVTAKDIVLAIIGEIGTAGGTGYVIEYAGEAIRSLSMEGRMTICNMSIEGGARAGLIAPDEITFEYIKGKPRAPKGEALEQAIAYWKTLKSDEGAHFDRVVKLNAAELPPIVSWGSSPEDVVSVQGIVPNPDEIQDETKRASKWRALEYMGLKPGTPMTDINIDRVFIGSCTNGRIEDLRAVANVVEGKTVASTVNAMIVPGSGLVKEQAEAEGLDKIFKAAGFDWREPGCSMCLAMNDDRLKPGERCASTSNRNFEGRQGFKGRTHLVSPAMAAAAAIAGHFVDIREWN</sequence>
<dbReference type="EC" id="4.2.1.33" evidence="1"/>
<dbReference type="EMBL" id="CP001074">
    <property type="protein sequence ID" value="ACE93176.1"/>
    <property type="molecule type" value="Genomic_DNA"/>
</dbReference>
<dbReference type="SMR" id="B3PR22"/>
<dbReference type="KEGG" id="rec:RHECIAT_CH0004247"/>
<dbReference type="eggNOG" id="COG0065">
    <property type="taxonomic scope" value="Bacteria"/>
</dbReference>
<dbReference type="HOGENOM" id="CLU_006714_3_4_5"/>
<dbReference type="UniPathway" id="UPA00048">
    <property type="reaction ID" value="UER00071"/>
</dbReference>
<dbReference type="Proteomes" id="UP000008817">
    <property type="component" value="Chromosome"/>
</dbReference>
<dbReference type="GO" id="GO:0003861">
    <property type="term" value="F:3-isopropylmalate dehydratase activity"/>
    <property type="evidence" value="ECO:0007669"/>
    <property type="project" value="UniProtKB-UniRule"/>
</dbReference>
<dbReference type="GO" id="GO:0051539">
    <property type="term" value="F:4 iron, 4 sulfur cluster binding"/>
    <property type="evidence" value="ECO:0007669"/>
    <property type="project" value="UniProtKB-KW"/>
</dbReference>
<dbReference type="GO" id="GO:0046872">
    <property type="term" value="F:metal ion binding"/>
    <property type="evidence" value="ECO:0007669"/>
    <property type="project" value="UniProtKB-KW"/>
</dbReference>
<dbReference type="GO" id="GO:0009098">
    <property type="term" value="P:L-leucine biosynthetic process"/>
    <property type="evidence" value="ECO:0007669"/>
    <property type="project" value="UniProtKB-UniRule"/>
</dbReference>
<dbReference type="CDD" id="cd01583">
    <property type="entry name" value="IPMI"/>
    <property type="match status" value="1"/>
</dbReference>
<dbReference type="FunFam" id="3.30.499.10:FF:000006">
    <property type="entry name" value="3-isopropylmalate dehydratase large subunit"/>
    <property type="match status" value="1"/>
</dbReference>
<dbReference type="FunFam" id="3.30.499.10:FF:000007">
    <property type="entry name" value="3-isopropylmalate dehydratase large subunit"/>
    <property type="match status" value="1"/>
</dbReference>
<dbReference type="Gene3D" id="3.30.499.10">
    <property type="entry name" value="Aconitase, domain 3"/>
    <property type="match status" value="2"/>
</dbReference>
<dbReference type="HAMAP" id="MF_01026">
    <property type="entry name" value="LeuC_type1"/>
    <property type="match status" value="1"/>
</dbReference>
<dbReference type="InterPro" id="IPR004430">
    <property type="entry name" value="3-IsopropMal_deHydase_lsu"/>
</dbReference>
<dbReference type="InterPro" id="IPR015931">
    <property type="entry name" value="Acnase/IPM_dHydase_lsu_aba_1/3"/>
</dbReference>
<dbReference type="InterPro" id="IPR001030">
    <property type="entry name" value="Acoase/IPM_deHydtase_lsu_aba"/>
</dbReference>
<dbReference type="InterPro" id="IPR018136">
    <property type="entry name" value="Aconitase_4Fe-4S_BS"/>
</dbReference>
<dbReference type="InterPro" id="IPR036008">
    <property type="entry name" value="Aconitase_4Fe-4S_dom"/>
</dbReference>
<dbReference type="InterPro" id="IPR050067">
    <property type="entry name" value="IPM_dehydratase_rel_enz"/>
</dbReference>
<dbReference type="InterPro" id="IPR033941">
    <property type="entry name" value="IPMI_cat"/>
</dbReference>
<dbReference type="NCBIfam" id="TIGR00170">
    <property type="entry name" value="leuC"/>
    <property type="match status" value="1"/>
</dbReference>
<dbReference type="NCBIfam" id="NF004016">
    <property type="entry name" value="PRK05478.1"/>
    <property type="match status" value="1"/>
</dbReference>
<dbReference type="NCBIfam" id="NF009116">
    <property type="entry name" value="PRK12466.1"/>
    <property type="match status" value="1"/>
</dbReference>
<dbReference type="PANTHER" id="PTHR43822:SF9">
    <property type="entry name" value="3-ISOPROPYLMALATE DEHYDRATASE"/>
    <property type="match status" value="1"/>
</dbReference>
<dbReference type="PANTHER" id="PTHR43822">
    <property type="entry name" value="HOMOACONITASE, MITOCHONDRIAL-RELATED"/>
    <property type="match status" value="1"/>
</dbReference>
<dbReference type="Pfam" id="PF00330">
    <property type="entry name" value="Aconitase"/>
    <property type="match status" value="1"/>
</dbReference>
<dbReference type="PRINTS" id="PR00415">
    <property type="entry name" value="ACONITASE"/>
</dbReference>
<dbReference type="SUPFAM" id="SSF53732">
    <property type="entry name" value="Aconitase iron-sulfur domain"/>
    <property type="match status" value="1"/>
</dbReference>
<dbReference type="PROSITE" id="PS00450">
    <property type="entry name" value="ACONITASE_1"/>
    <property type="match status" value="1"/>
</dbReference>
<dbReference type="PROSITE" id="PS01244">
    <property type="entry name" value="ACONITASE_2"/>
    <property type="match status" value="1"/>
</dbReference>
<name>LEUC_RHIE6</name>
<protein>
    <recommendedName>
        <fullName evidence="1">3-isopropylmalate dehydratase large subunit</fullName>
        <ecNumber evidence="1">4.2.1.33</ecNumber>
    </recommendedName>
    <alternativeName>
        <fullName evidence="1">Alpha-IPM isomerase</fullName>
        <shortName evidence="1">IPMI</shortName>
    </alternativeName>
    <alternativeName>
        <fullName evidence="1">Isopropylmalate isomerase</fullName>
    </alternativeName>
</protein>
<feature type="chain" id="PRO_1000135708" description="3-isopropylmalate dehydratase large subunit">
    <location>
        <begin position="1"/>
        <end position="469"/>
    </location>
</feature>
<feature type="binding site" evidence="1">
    <location>
        <position position="350"/>
    </location>
    <ligand>
        <name>[4Fe-4S] cluster</name>
        <dbReference type="ChEBI" id="CHEBI:49883"/>
    </ligand>
</feature>
<feature type="binding site" evidence="1">
    <location>
        <position position="410"/>
    </location>
    <ligand>
        <name>[4Fe-4S] cluster</name>
        <dbReference type="ChEBI" id="CHEBI:49883"/>
    </ligand>
</feature>
<feature type="binding site" evidence="1">
    <location>
        <position position="413"/>
    </location>
    <ligand>
        <name>[4Fe-4S] cluster</name>
        <dbReference type="ChEBI" id="CHEBI:49883"/>
    </ligand>
</feature>
<gene>
    <name evidence="1" type="primary">leuC</name>
    <name type="ordered locus">RHECIAT_CH0004247</name>
</gene>
<reference key="1">
    <citation type="journal article" date="2010" name="Appl. Environ. Microbiol.">
        <title>Conserved symbiotic plasmid DNA sequences in the multireplicon pangenomic structure of Rhizobium etli.</title>
        <authorList>
            <person name="Gonzalez V."/>
            <person name="Acosta J.L."/>
            <person name="Santamaria R.I."/>
            <person name="Bustos P."/>
            <person name="Fernandez J.L."/>
            <person name="Hernandez Gonzalez I.L."/>
            <person name="Diaz R."/>
            <person name="Flores M."/>
            <person name="Palacios R."/>
            <person name="Mora J."/>
            <person name="Davila G."/>
        </authorList>
    </citation>
    <scope>NUCLEOTIDE SEQUENCE [LARGE SCALE GENOMIC DNA]</scope>
    <source>
        <strain>CIAT 652</strain>
    </source>
</reference>
<proteinExistence type="inferred from homology"/>
<organism>
    <name type="scientific">Rhizobium etli (strain CIAT 652)</name>
    <dbReference type="NCBI Taxonomy" id="491916"/>
    <lineage>
        <taxon>Bacteria</taxon>
        <taxon>Pseudomonadati</taxon>
        <taxon>Pseudomonadota</taxon>
        <taxon>Alphaproteobacteria</taxon>
        <taxon>Hyphomicrobiales</taxon>
        <taxon>Rhizobiaceae</taxon>
        <taxon>Rhizobium/Agrobacterium group</taxon>
        <taxon>Rhizobium</taxon>
    </lineage>
</organism>
<accession>B3PR22</accession>
<comment type="function">
    <text evidence="1">Catalyzes the isomerization between 2-isopropylmalate and 3-isopropylmalate, via the formation of 2-isopropylmaleate.</text>
</comment>
<comment type="catalytic activity">
    <reaction evidence="1">
        <text>(2R,3S)-3-isopropylmalate = (2S)-2-isopropylmalate</text>
        <dbReference type="Rhea" id="RHEA:32287"/>
        <dbReference type="ChEBI" id="CHEBI:1178"/>
        <dbReference type="ChEBI" id="CHEBI:35121"/>
        <dbReference type="EC" id="4.2.1.33"/>
    </reaction>
</comment>
<comment type="cofactor">
    <cofactor evidence="1">
        <name>[4Fe-4S] cluster</name>
        <dbReference type="ChEBI" id="CHEBI:49883"/>
    </cofactor>
    <text evidence="1">Binds 1 [4Fe-4S] cluster per subunit.</text>
</comment>
<comment type="pathway">
    <text evidence="1">Amino-acid biosynthesis; L-leucine biosynthesis; L-leucine from 3-methyl-2-oxobutanoate: step 2/4.</text>
</comment>
<comment type="subunit">
    <text evidence="1">Heterodimer of LeuC and LeuD.</text>
</comment>
<comment type="similarity">
    <text evidence="1">Belongs to the aconitase/IPM isomerase family. LeuC type 1 subfamily.</text>
</comment>
<evidence type="ECO:0000255" key="1">
    <source>
        <dbReference type="HAMAP-Rule" id="MF_01026"/>
    </source>
</evidence>
<keyword id="KW-0004">4Fe-4S</keyword>
<keyword id="KW-0028">Amino-acid biosynthesis</keyword>
<keyword id="KW-0100">Branched-chain amino acid biosynthesis</keyword>
<keyword id="KW-0408">Iron</keyword>
<keyword id="KW-0411">Iron-sulfur</keyword>
<keyword id="KW-0432">Leucine biosynthesis</keyword>
<keyword id="KW-0456">Lyase</keyword>
<keyword id="KW-0479">Metal-binding</keyword>